<protein>
    <recommendedName>
        <fullName evidence="1">HTH-type transcriptional regulatory protein TyrR</fullName>
    </recommendedName>
</protein>
<reference key="1">
    <citation type="submission" date="1997-02" db="EMBL/GenBank/DDBJ databases">
        <title>Cloning and characterization of the tyrR genes of Citrobacter braakii and Salmonella typhimurium.</title>
        <authorList>
            <person name="Bai Q."/>
            <person name="Somerville R.L."/>
        </authorList>
    </citation>
    <scope>NUCLEOTIDE SEQUENCE [GENOMIC DNA]</scope>
    <source>
        <strain>ATCC 29063</strain>
    </source>
</reference>
<dbReference type="EMBL" id="U90140">
    <property type="protein sequence ID" value="AAB93868.1"/>
    <property type="molecule type" value="Genomic_DNA"/>
</dbReference>
<dbReference type="SMR" id="O54426"/>
<dbReference type="GO" id="GO:0005737">
    <property type="term" value="C:cytoplasm"/>
    <property type="evidence" value="ECO:0007669"/>
    <property type="project" value="UniProtKB-SubCell"/>
</dbReference>
<dbReference type="GO" id="GO:0005524">
    <property type="term" value="F:ATP binding"/>
    <property type="evidence" value="ECO:0007669"/>
    <property type="project" value="UniProtKB-KW"/>
</dbReference>
<dbReference type="GO" id="GO:0016887">
    <property type="term" value="F:ATP hydrolysis activity"/>
    <property type="evidence" value="ECO:0007669"/>
    <property type="project" value="InterPro"/>
</dbReference>
<dbReference type="GO" id="GO:0003677">
    <property type="term" value="F:DNA binding"/>
    <property type="evidence" value="ECO:0007669"/>
    <property type="project" value="UniProtKB-KW"/>
</dbReference>
<dbReference type="GO" id="GO:0009056">
    <property type="term" value="P:catabolic process"/>
    <property type="evidence" value="ECO:0007669"/>
    <property type="project" value="UniProtKB-KW"/>
</dbReference>
<dbReference type="GO" id="GO:0006355">
    <property type="term" value="P:regulation of DNA-templated transcription"/>
    <property type="evidence" value="ECO:0007669"/>
    <property type="project" value="InterPro"/>
</dbReference>
<dbReference type="CDD" id="cd00009">
    <property type="entry name" value="AAA"/>
    <property type="match status" value="1"/>
</dbReference>
<dbReference type="CDD" id="cd04877">
    <property type="entry name" value="ACT_TyrR"/>
    <property type="match status" value="1"/>
</dbReference>
<dbReference type="CDD" id="cd00130">
    <property type="entry name" value="PAS"/>
    <property type="match status" value="1"/>
</dbReference>
<dbReference type="FunFam" id="3.40.50.300:FF:000006">
    <property type="entry name" value="DNA-binding transcriptional regulator NtrC"/>
    <property type="match status" value="1"/>
</dbReference>
<dbReference type="FunFam" id="1.10.10.60:FF:000112">
    <property type="entry name" value="TyrR family transcriptional regulator"/>
    <property type="match status" value="1"/>
</dbReference>
<dbReference type="FunFam" id="3.30.70.260:FF:000013">
    <property type="entry name" value="TyrR family transcriptional regulator"/>
    <property type="match status" value="1"/>
</dbReference>
<dbReference type="Gene3D" id="1.10.8.60">
    <property type="match status" value="1"/>
</dbReference>
<dbReference type="Gene3D" id="3.30.70.260">
    <property type="match status" value="1"/>
</dbReference>
<dbReference type="Gene3D" id="1.10.10.60">
    <property type="entry name" value="Homeodomain-like"/>
    <property type="match status" value="1"/>
</dbReference>
<dbReference type="Gene3D" id="3.40.50.300">
    <property type="entry name" value="P-loop containing nucleotide triphosphate hydrolases"/>
    <property type="match status" value="1"/>
</dbReference>
<dbReference type="Gene3D" id="3.30.450.20">
    <property type="entry name" value="PAS domain"/>
    <property type="match status" value="1"/>
</dbReference>
<dbReference type="InterPro" id="IPR003593">
    <property type="entry name" value="AAA+_ATPase"/>
</dbReference>
<dbReference type="InterPro" id="IPR045865">
    <property type="entry name" value="ACT-like_dom_sf"/>
</dbReference>
<dbReference type="InterPro" id="IPR002912">
    <property type="entry name" value="ACT_dom"/>
</dbReference>
<dbReference type="InterPro" id="IPR009057">
    <property type="entry name" value="Homeodomain-like_sf"/>
</dbReference>
<dbReference type="InterPro" id="IPR030828">
    <property type="entry name" value="HTH_TyrR"/>
</dbReference>
<dbReference type="InterPro" id="IPR027417">
    <property type="entry name" value="P-loop_NTPase"/>
</dbReference>
<dbReference type="InterPro" id="IPR000014">
    <property type="entry name" value="PAS"/>
</dbReference>
<dbReference type="InterPro" id="IPR035965">
    <property type="entry name" value="PAS-like_dom_sf"/>
</dbReference>
<dbReference type="InterPro" id="IPR002078">
    <property type="entry name" value="Sigma_54_int"/>
</dbReference>
<dbReference type="InterPro" id="IPR025943">
    <property type="entry name" value="Sigma_54_int_dom_ATP-bd_2"/>
</dbReference>
<dbReference type="NCBIfam" id="TIGR04381">
    <property type="entry name" value="HTH_TypR"/>
    <property type="match status" value="1"/>
</dbReference>
<dbReference type="NCBIfam" id="NF008085">
    <property type="entry name" value="PRK10820.1"/>
    <property type="match status" value="1"/>
</dbReference>
<dbReference type="PANTHER" id="PTHR32071:SF3">
    <property type="entry name" value="HTH-TYPE TRANSCRIPTIONAL REGULATORY PROTEIN TYRR"/>
    <property type="match status" value="1"/>
</dbReference>
<dbReference type="PANTHER" id="PTHR32071">
    <property type="entry name" value="TRANSCRIPTIONAL REGULATORY PROTEIN"/>
    <property type="match status" value="1"/>
</dbReference>
<dbReference type="Pfam" id="PF18024">
    <property type="entry name" value="HTH_50"/>
    <property type="match status" value="1"/>
</dbReference>
<dbReference type="Pfam" id="PF13188">
    <property type="entry name" value="PAS_8"/>
    <property type="match status" value="1"/>
</dbReference>
<dbReference type="Pfam" id="PF00158">
    <property type="entry name" value="Sigma54_activat"/>
    <property type="match status" value="1"/>
</dbReference>
<dbReference type="SMART" id="SM00382">
    <property type="entry name" value="AAA"/>
    <property type="match status" value="1"/>
</dbReference>
<dbReference type="SMART" id="SM00091">
    <property type="entry name" value="PAS"/>
    <property type="match status" value="1"/>
</dbReference>
<dbReference type="SUPFAM" id="SSF55021">
    <property type="entry name" value="ACT-like"/>
    <property type="match status" value="1"/>
</dbReference>
<dbReference type="SUPFAM" id="SSF46689">
    <property type="entry name" value="Homeodomain-like"/>
    <property type="match status" value="1"/>
</dbReference>
<dbReference type="SUPFAM" id="SSF52540">
    <property type="entry name" value="P-loop containing nucleoside triphosphate hydrolases"/>
    <property type="match status" value="1"/>
</dbReference>
<dbReference type="SUPFAM" id="SSF55785">
    <property type="entry name" value="PYP-like sensor domain (PAS domain)"/>
    <property type="match status" value="1"/>
</dbReference>
<dbReference type="PROSITE" id="PS51671">
    <property type="entry name" value="ACT"/>
    <property type="match status" value="1"/>
</dbReference>
<dbReference type="PROSITE" id="PS00676">
    <property type="entry name" value="SIGMA54_INTERACT_2"/>
    <property type="match status" value="1"/>
</dbReference>
<dbReference type="PROSITE" id="PS50045">
    <property type="entry name" value="SIGMA54_INTERACT_4"/>
    <property type="match status" value="1"/>
</dbReference>
<proteinExistence type="inferred from homology"/>
<feature type="chain" id="PRO_0000081338" description="HTH-type transcriptional regulatory protein TyrR">
    <location>
        <begin position="1"/>
        <end position="514"/>
    </location>
</feature>
<feature type="domain" description="ACT" evidence="4">
    <location>
        <begin position="2"/>
        <end position="72"/>
    </location>
</feature>
<feature type="domain" description="PAS" evidence="2">
    <location>
        <begin position="78"/>
        <end position="120"/>
    </location>
</feature>
<feature type="domain" description="Sigma-54 factor interaction" evidence="3">
    <location>
        <begin position="206"/>
        <end position="428"/>
    </location>
</feature>
<feature type="DNA-binding region" description="H-T-H motif" evidence="1">
    <location>
        <begin position="482"/>
        <end position="502"/>
    </location>
</feature>
<feature type="binding site" evidence="3">
    <location>
        <begin position="234"/>
        <end position="241"/>
    </location>
    <ligand>
        <name>ATP</name>
        <dbReference type="ChEBI" id="CHEBI:30616"/>
    </ligand>
</feature>
<feature type="binding site" evidence="3">
    <location>
        <begin position="290"/>
        <end position="299"/>
    </location>
    <ligand>
        <name>ATP</name>
        <dbReference type="ChEBI" id="CHEBI:30616"/>
    </ligand>
</feature>
<accession>O54426</accession>
<keyword id="KW-0010">Activator</keyword>
<keyword id="KW-0058">Aromatic hydrocarbons catabolism</keyword>
<keyword id="KW-0067">ATP-binding</keyword>
<keyword id="KW-0963">Cytoplasm</keyword>
<keyword id="KW-0238">DNA-binding</keyword>
<keyword id="KW-0547">Nucleotide-binding</keyword>
<keyword id="KW-0678">Repressor</keyword>
<keyword id="KW-0804">Transcription</keyword>
<keyword id="KW-0805">Transcription regulation</keyword>
<evidence type="ECO:0000250" key="1">
    <source>
        <dbReference type="UniProtKB" id="P07604"/>
    </source>
</evidence>
<evidence type="ECO:0000255" key="2">
    <source>
        <dbReference type="PROSITE-ProRule" id="PRU00140"/>
    </source>
</evidence>
<evidence type="ECO:0000255" key="3">
    <source>
        <dbReference type="PROSITE-ProRule" id="PRU00193"/>
    </source>
</evidence>
<evidence type="ECO:0000255" key="4">
    <source>
        <dbReference type="PROSITE-ProRule" id="PRU01007"/>
    </source>
</evidence>
<evidence type="ECO:0000303" key="5">
    <source ref="1"/>
</evidence>
<name>TYRR_CITBR</name>
<organism>
    <name type="scientific">Citrobacter braakii</name>
    <dbReference type="NCBI Taxonomy" id="57706"/>
    <lineage>
        <taxon>Bacteria</taxon>
        <taxon>Pseudomonadati</taxon>
        <taxon>Pseudomonadota</taxon>
        <taxon>Gammaproteobacteria</taxon>
        <taxon>Enterobacterales</taxon>
        <taxon>Enterobacteriaceae</taxon>
        <taxon>Citrobacter</taxon>
        <taxon>Citrobacter freundii complex</taxon>
    </lineage>
</organism>
<sequence length="514" mass="57863">MRLEVFCEDRLGLTRELLDLLVLRSIDLRGIEIDPIGRIYLNFAELEFTNFSSLMAEIRRISGVTDVRTVPWMPSEREHLALSALLEALPEPVLSLDMKSKIEMANPASCQLFAHTQDRMRNHTAAQLINGFNFQRWLESNPQDSHSEHVVINGQNFLMEITPVHLQGENQEQMLTGAVVMLRSTIRMGRQLQNMTTQDLSAFSQIIAVSAKMKHVVEQARKLATLSAPLLITGNTGTGKDLFAHACHLASPRASKPYLALNCASIPEDAVESELFGHAPEGKKGFFEQANGGSVLLDEIGEMSPRMQTKLLRFLNDGTFRRVGEDHEVHVDVRVICATQKNLVEMVQKGLFREDLYYRLNVLTLNLPPLRDLPADIMPLTELFVARFADEQGVPRPKLSADLSTVLTRYGWPGNVRHVKNAIYRALTQLEGYELRPQDILLPDYDAATVAVGEEVMEGSLDEITSRFERSVLTQLYMNYPSTRKLAKRLGVSHTAIANKLREYGLSQQKKSEE</sequence>
<comment type="function">
    <text evidence="1">Dual transcriptional regulator of the TyrR regulon, which includes a number of genes coding for proteins involved in the biosynthesis or transport of the three aromatic amino acids, phenylalanine, tyrosine and tryptophan. These three aromatic amino acids act as effectors which bind to the TyrR protein to form an active regulatory protein. Acts by binding specifically to TyrR boxes in the promoter region of the target genes.</text>
</comment>
<comment type="subunit">
    <text evidence="1">Homodimer. In presence of tyrosine (or high concentrations of phenylalanine or tryptophan) and ATP, it self-associates to form an hexamer.</text>
</comment>
<comment type="subcellular location">
    <subcellularLocation>
        <location evidence="1">Cytoplasm</location>
    </subcellularLocation>
</comment>
<gene>
    <name evidence="5" type="primary">tyrR</name>
</gene>